<feature type="chain" id="PRO_1000007221" description="Large ribosomal subunit protein bL28">
    <location>
        <begin position="1"/>
        <end position="78"/>
    </location>
</feature>
<feature type="region of interest" description="Disordered" evidence="2">
    <location>
        <begin position="1"/>
        <end position="26"/>
    </location>
</feature>
<organism>
    <name type="scientific">Corynebacterium jeikeium (strain K411)</name>
    <dbReference type="NCBI Taxonomy" id="306537"/>
    <lineage>
        <taxon>Bacteria</taxon>
        <taxon>Bacillati</taxon>
        <taxon>Actinomycetota</taxon>
        <taxon>Actinomycetes</taxon>
        <taxon>Mycobacteriales</taxon>
        <taxon>Corynebacteriaceae</taxon>
        <taxon>Corynebacterium</taxon>
    </lineage>
</organism>
<proteinExistence type="inferred from homology"/>
<comment type="similarity">
    <text evidence="1">Belongs to the bacterial ribosomal protein bL28 family.</text>
</comment>
<accession>Q4JTZ9</accession>
<sequence>MSAYCQVTGRKPSFGKSVSHSHRRTNRRWNPNIQRRTFYLPSEGRSITLNVSTKGLKTIDRDGIESVVAKIRARGEKI</sequence>
<gene>
    <name evidence="1" type="primary">rpmB</name>
    <name type="ordered locus">jk1535</name>
</gene>
<dbReference type="EMBL" id="CR931997">
    <property type="protein sequence ID" value="CAI37708.1"/>
    <property type="molecule type" value="Genomic_DNA"/>
</dbReference>
<dbReference type="RefSeq" id="WP_005293665.1">
    <property type="nucleotide sequence ID" value="NC_007164.1"/>
</dbReference>
<dbReference type="SMR" id="Q4JTZ9"/>
<dbReference type="STRING" id="306537.jk1535"/>
<dbReference type="GeneID" id="92739173"/>
<dbReference type="KEGG" id="cjk:jk1535"/>
<dbReference type="eggNOG" id="COG0227">
    <property type="taxonomic scope" value="Bacteria"/>
</dbReference>
<dbReference type="HOGENOM" id="CLU_064548_3_1_11"/>
<dbReference type="OrthoDB" id="9805609at2"/>
<dbReference type="Proteomes" id="UP000000545">
    <property type="component" value="Chromosome"/>
</dbReference>
<dbReference type="GO" id="GO:1990904">
    <property type="term" value="C:ribonucleoprotein complex"/>
    <property type="evidence" value="ECO:0007669"/>
    <property type="project" value="UniProtKB-KW"/>
</dbReference>
<dbReference type="GO" id="GO:0005840">
    <property type="term" value="C:ribosome"/>
    <property type="evidence" value="ECO:0007669"/>
    <property type="project" value="UniProtKB-KW"/>
</dbReference>
<dbReference type="GO" id="GO:0003735">
    <property type="term" value="F:structural constituent of ribosome"/>
    <property type="evidence" value="ECO:0007669"/>
    <property type="project" value="InterPro"/>
</dbReference>
<dbReference type="GO" id="GO:0006412">
    <property type="term" value="P:translation"/>
    <property type="evidence" value="ECO:0007669"/>
    <property type="project" value="UniProtKB-UniRule"/>
</dbReference>
<dbReference type="FunFam" id="2.30.170.40:FF:000001">
    <property type="entry name" value="50S ribosomal protein L28"/>
    <property type="match status" value="1"/>
</dbReference>
<dbReference type="Gene3D" id="2.30.170.40">
    <property type="entry name" value="Ribosomal protein L28/L24"/>
    <property type="match status" value="1"/>
</dbReference>
<dbReference type="HAMAP" id="MF_00373">
    <property type="entry name" value="Ribosomal_bL28"/>
    <property type="match status" value="1"/>
</dbReference>
<dbReference type="InterPro" id="IPR050096">
    <property type="entry name" value="Bacterial_rp_bL28"/>
</dbReference>
<dbReference type="InterPro" id="IPR026569">
    <property type="entry name" value="Ribosomal_bL28"/>
</dbReference>
<dbReference type="InterPro" id="IPR034704">
    <property type="entry name" value="Ribosomal_bL28/bL31-like_sf"/>
</dbReference>
<dbReference type="InterPro" id="IPR001383">
    <property type="entry name" value="Ribosomal_bL28_bact-type"/>
</dbReference>
<dbReference type="InterPro" id="IPR037147">
    <property type="entry name" value="Ribosomal_bL28_sf"/>
</dbReference>
<dbReference type="NCBIfam" id="TIGR00009">
    <property type="entry name" value="L28"/>
    <property type="match status" value="1"/>
</dbReference>
<dbReference type="PANTHER" id="PTHR39080">
    <property type="entry name" value="50S RIBOSOMAL PROTEIN L28"/>
    <property type="match status" value="1"/>
</dbReference>
<dbReference type="PANTHER" id="PTHR39080:SF1">
    <property type="entry name" value="LARGE RIBOSOMAL SUBUNIT PROTEIN BL28A"/>
    <property type="match status" value="1"/>
</dbReference>
<dbReference type="Pfam" id="PF00830">
    <property type="entry name" value="Ribosomal_L28"/>
    <property type="match status" value="1"/>
</dbReference>
<dbReference type="SUPFAM" id="SSF143800">
    <property type="entry name" value="L28p-like"/>
    <property type="match status" value="1"/>
</dbReference>
<protein>
    <recommendedName>
        <fullName evidence="1">Large ribosomal subunit protein bL28</fullName>
    </recommendedName>
    <alternativeName>
        <fullName evidence="3">50S ribosomal protein L28</fullName>
    </alternativeName>
</protein>
<reference key="1">
    <citation type="journal article" date="2005" name="J. Bacteriol.">
        <title>Complete genome sequence and analysis of the multiresistant nosocomial pathogen Corynebacterium jeikeium K411, a lipid-requiring bacterium of the human skin flora.</title>
        <authorList>
            <person name="Tauch A."/>
            <person name="Kaiser O."/>
            <person name="Hain T."/>
            <person name="Goesmann A."/>
            <person name="Weisshaar B."/>
            <person name="Albersmeier A."/>
            <person name="Bekel T."/>
            <person name="Bischoff N."/>
            <person name="Brune I."/>
            <person name="Chakraborty T."/>
            <person name="Kalinowski J."/>
            <person name="Meyer F."/>
            <person name="Rupp O."/>
            <person name="Schneiker S."/>
            <person name="Viehoever P."/>
            <person name="Puehler A."/>
        </authorList>
    </citation>
    <scope>NUCLEOTIDE SEQUENCE [LARGE SCALE GENOMIC DNA]</scope>
    <source>
        <strain>K411</strain>
    </source>
</reference>
<keyword id="KW-1185">Reference proteome</keyword>
<keyword id="KW-0687">Ribonucleoprotein</keyword>
<keyword id="KW-0689">Ribosomal protein</keyword>
<evidence type="ECO:0000255" key="1">
    <source>
        <dbReference type="HAMAP-Rule" id="MF_00373"/>
    </source>
</evidence>
<evidence type="ECO:0000256" key="2">
    <source>
        <dbReference type="SAM" id="MobiDB-lite"/>
    </source>
</evidence>
<evidence type="ECO:0000305" key="3"/>
<name>RL28_CORJK</name>